<reference key="1">
    <citation type="journal article" date="2011" name="J. Bacteriol.">
        <title>Genome sequence of lineage III Listeria monocytogenes strain HCC23.</title>
        <authorList>
            <person name="Steele C.L."/>
            <person name="Donaldson J.R."/>
            <person name="Paul D."/>
            <person name="Banes M.M."/>
            <person name="Arick T."/>
            <person name="Bridges S.M."/>
            <person name="Lawrence M.L."/>
        </authorList>
    </citation>
    <scope>NUCLEOTIDE SEQUENCE [LARGE SCALE GENOMIC DNA]</scope>
    <source>
        <strain>HCC23</strain>
    </source>
</reference>
<proteinExistence type="inferred from homology"/>
<sequence length="56" mass="6357">MAVPARRTSKAKKNKRRTHKGLTTPGLSRDSETGEYRMSHRISPDGTYKGRTIIEK</sequence>
<name>RL32_LISMH</name>
<accession>B8DCI6</accession>
<dbReference type="EMBL" id="CP001175">
    <property type="protein sequence ID" value="ACK40489.1"/>
    <property type="molecule type" value="Genomic_DNA"/>
</dbReference>
<dbReference type="RefSeq" id="WP_003730546.1">
    <property type="nucleotide sequence ID" value="NC_011660.1"/>
</dbReference>
<dbReference type="SMR" id="B8DCI6"/>
<dbReference type="GeneID" id="86844427"/>
<dbReference type="KEGG" id="lmh:LMHCC_2151"/>
<dbReference type="HOGENOM" id="CLU_129084_1_3_9"/>
<dbReference type="GO" id="GO:0015934">
    <property type="term" value="C:large ribosomal subunit"/>
    <property type="evidence" value="ECO:0007669"/>
    <property type="project" value="InterPro"/>
</dbReference>
<dbReference type="GO" id="GO:0003735">
    <property type="term" value="F:structural constituent of ribosome"/>
    <property type="evidence" value="ECO:0007669"/>
    <property type="project" value="InterPro"/>
</dbReference>
<dbReference type="GO" id="GO:0006412">
    <property type="term" value="P:translation"/>
    <property type="evidence" value="ECO:0007669"/>
    <property type="project" value="UniProtKB-UniRule"/>
</dbReference>
<dbReference type="HAMAP" id="MF_00340">
    <property type="entry name" value="Ribosomal_bL32"/>
    <property type="match status" value="1"/>
</dbReference>
<dbReference type="InterPro" id="IPR002677">
    <property type="entry name" value="Ribosomal_bL32"/>
</dbReference>
<dbReference type="InterPro" id="IPR044957">
    <property type="entry name" value="Ribosomal_bL32_bact"/>
</dbReference>
<dbReference type="InterPro" id="IPR011332">
    <property type="entry name" value="Ribosomal_zn-bd"/>
</dbReference>
<dbReference type="NCBIfam" id="TIGR01031">
    <property type="entry name" value="rpmF_bact"/>
    <property type="match status" value="1"/>
</dbReference>
<dbReference type="PANTHER" id="PTHR35534">
    <property type="entry name" value="50S RIBOSOMAL PROTEIN L32"/>
    <property type="match status" value="1"/>
</dbReference>
<dbReference type="PANTHER" id="PTHR35534:SF1">
    <property type="entry name" value="LARGE RIBOSOMAL SUBUNIT PROTEIN BL32"/>
    <property type="match status" value="1"/>
</dbReference>
<dbReference type="Pfam" id="PF01783">
    <property type="entry name" value="Ribosomal_L32p"/>
    <property type="match status" value="1"/>
</dbReference>
<dbReference type="SUPFAM" id="SSF57829">
    <property type="entry name" value="Zn-binding ribosomal proteins"/>
    <property type="match status" value="1"/>
</dbReference>
<organism>
    <name type="scientific">Listeria monocytogenes serotype 4a (strain HCC23)</name>
    <dbReference type="NCBI Taxonomy" id="552536"/>
    <lineage>
        <taxon>Bacteria</taxon>
        <taxon>Bacillati</taxon>
        <taxon>Bacillota</taxon>
        <taxon>Bacilli</taxon>
        <taxon>Bacillales</taxon>
        <taxon>Listeriaceae</taxon>
        <taxon>Listeria</taxon>
    </lineage>
</organism>
<protein>
    <recommendedName>
        <fullName evidence="1">Large ribosomal subunit protein bL32</fullName>
    </recommendedName>
    <alternativeName>
        <fullName evidence="3">50S ribosomal protein L32</fullName>
    </alternativeName>
</protein>
<gene>
    <name evidence="1" type="primary">rpmF</name>
    <name type="ordered locus">LMHCC_2151</name>
</gene>
<evidence type="ECO:0000255" key="1">
    <source>
        <dbReference type="HAMAP-Rule" id="MF_00340"/>
    </source>
</evidence>
<evidence type="ECO:0000256" key="2">
    <source>
        <dbReference type="SAM" id="MobiDB-lite"/>
    </source>
</evidence>
<evidence type="ECO:0000305" key="3"/>
<feature type="chain" id="PRO_1000195981" description="Large ribosomal subunit protein bL32">
    <location>
        <begin position="1"/>
        <end position="56"/>
    </location>
</feature>
<feature type="region of interest" description="Disordered" evidence="2">
    <location>
        <begin position="1"/>
        <end position="56"/>
    </location>
</feature>
<feature type="compositionally biased region" description="Basic residues" evidence="2">
    <location>
        <begin position="7"/>
        <end position="20"/>
    </location>
</feature>
<feature type="compositionally biased region" description="Basic and acidic residues" evidence="2">
    <location>
        <begin position="29"/>
        <end position="38"/>
    </location>
</feature>
<comment type="similarity">
    <text evidence="1">Belongs to the bacterial ribosomal protein bL32 family.</text>
</comment>
<keyword id="KW-0687">Ribonucleoprotein</keyword>
<keyword id="KW-0689">Ribosomal protein</keyword>